<keyword id="KW-0017">Alkaloid metabolism</keyword>
<keyword id="KW-0436">Ligase</keyword>
<keyword id="KW-0596">Phosphopantetheine</keyword>
<keyword id="KW-0597">Phosphoprotein</keyword>
<keyword id="KW-0677">Repeat</keyword>
<accession>A0AAN4PB13</accession>
<proteinExistence type="evidence at protein level"/>
<feature type="chain" id="PRO_0000462092" description="Nonribosomal peptide synthetase lenA">
    <location>
        <begin position="1"/>
        <end position="4650"/>
    </location>
</feature>
<feature type="domain" description="Carrier 1" evidence="2">
    <location>
        <begin position="773"/>
        <end position="849"/>
    </location>
</feature>
<feature type="domain" description="Carrier 2" evidence="2">
    <location>
        <begin position="1745"/>
        <end position="1822"/>
    </location>
</feature>
<feature type="domain" description="Carrier 3" evidence="2">
    <location>
        <begin position="2630"/>
        <end position="2708"/>
    </location>
</feature>
<feature type="domain" description="Carrier 4" evidence="2">
    <location>
        <begin position="4114"/>
        <end position="4190"/>
    </location>
</feature>
<feature type="region of interest" description="Adenylation 1" evidence="1 6">
    <location>
        <begin position="227"/>
        <end position="628"/>
    </location>
</feature>
<feature type="region of interest" description="Condensation 1" evidence="1 6">
    <location>
        <begin position="890"/>
        <end position="1212"/>
    </location>
</feature>
<feature type="region of interest" description="Adenylation 2" evidence="1 6">
    <location>
        <begin position="1288"/>
        <end position="1622"/>
    </location>
</feature>
<feature type="region of interest" description="Condensation 2" evidence="1 6">
    <location>
        <begin position="1850"/>
        <end position="2110"/>
    </location>
</feature>
<feature type="region of interest" description="Adenylation 3" evidence="1 6">
    <location>
        <begin position="2183"/>
        <end position="2511"/>
    </location>
</feature>
<feature type="region of interest" description="Epimerase" evidence="1 6">
    <location>
        <begin position="2722"/>
        <end position="2998"/>
    </location>
</feature>
<feature type="region of interest" description="Condensation 3" evidence="1 6">
    <location>
        <begin position="3128"/>
        <end position="3565"/>
    </location>
</feature>
<feature type="region of interest" description="Adenylation 4" evidence="1 6">
    <location>
        <begin position="3578"/>
        <end position="3980"/>
    </location>
</feature>
<feature type="region of interest" description="Condensation 4" evidence="1 6">
    <location>
        <begin position="4249"/>
        <end position="4648"/>
    </location>
</feature>
<feature type="modified residue" description="O-(pantetheine 4'-phosphoryl)serine" evidence="2">
    <location>
        <position position="810"/>
    </location>
</feature>
<feature type="modified residue" description="O-(pantetheine 4'-phosphoryl)serine" evidence="2">
    <location>
        <position position="1782"/>
    </location>
</feature>
<feature type="modified residue" description="O-(pantetheine 4'-phosphoryl)serine" evidence="2">
    <location>
        <position position="2667"/>
    </location>
</feature>
<feature type="modified residue" description="O-(pantetheine 4'-phosphoryl)serine" evidence="2">
    <location>
        <position position="4151"/>
    </location>
</feature>
<protein>
    <recommendedName>
        <fullName evidence="4">Nonribosomal peptide synthetase lenA</fullName>
        <shortName evidence="4">NRPS lenA</shortName>
        <ecNumber evidence="3">6.3.2.-</ecNumber>
    </recommendedName>
    <alternativeName>
        <fullName evidence="4">Lentopeptin biosynthesis cluster protein A</fullName>
    </alternativeName>
</protein>
<dbReference type="EC" id="6.3.2.-" evidence="3"/>
<dbReference type="EMBL" id="BCLY01000001">
    <property type="protein sequence ID" value="GAQ02833.1"/>
    <property type="molecule type" value="Genomic_DNA"/>
</dbReference>
<dbReference type="Proteomes" id="UP000051487">
    <property type="component" value="Unassembled WGS sequence"/>
</dbReference>
<dbReference type="GO" id="GO:0005737">
    <property type="term" value="C:cytoplasm"/>
    <property type="evidence" value="ECO:0007669"/>
    <property type="project" value="TreeGrafter"/>
</dbReference>
<dbReference type="GO" id="GO:0016874">
    <property type="term" value="F:ligase activity"/>
    <property type="evidence" value="ECO:0007669"/>
    <property type="project" value="UniProtKB-KW"/>
</dbReference>
<dbReference type="GO" id="GO:0031177">
    <property type="term" value="F:phosphopantetheine binding"/>
    <property type="evidence" value="ECO:0007669"/>
    <property type="project" value="InterPro"/>
</dbReference>
<dbReference type="GO" id="GO:0043041">
    <property type="term" value="P:amino acid activation for nonribosomal peptide biosynthetic process"/>
    <property type="evidence" value="ECO:0007669"/>
    <property type="project" value="TreeGrafter"/>
</dbReference>
<dbReference type="GO" id="GO:0044550">
    <property type="term" value="P:secondary metabolite biosynthetic process"/>
    <property type="evidence" value="ECO:0007669"/>
    <property type="project" value="TreeGrafter"/>
</dbReference>
<dbReference type="CDD" id="cd05918">
    <property type="entry name" value="A_NRPS_SidN3_like"/>
    <property type="match status" value="4"/>
</dbReference>
<dbReference type="CDD" id="cd19542">
    <property type="entry name" value="CT_NRPS-like"/>
    <property type="match status" value="2"/>
</dbReference>
<dbReference type="CDD" id="cd19545">
    <property type="entry name" value="FUM14_C_NRPS-like"/>
    <property type="match status" value="1"/>
</dbReference>
<dbReference type="FunFam" id="3.30.559.30:FF:000002">
    <property type="entry name" value="Nonribosomal peptide synthase Pes1"/>
    <property type="match status" value="1"/>
</dbReference>
<dbReference type="FunFam" id="3.30.300.30:FF:000015">
    <property type="entry name" value="Nonribosomal peptide synthase SidD"/>
    <property type="match status" value="4"/>
</dbReference>
<dbReference type="FunFam" id="3.40.50.12780:FF:000014">
    <property type="entry name" value="Nonribosomal peptide synthetase 1"/>
    <property type="match status" value="1"/>
</dbReference>
<dbReference type="Gene3D" id="3.30.300.30">
    <property type="match status" value="4"/>
</dbReference>
<dbReference type="Gene3D" id="1.10.1200.10">
    <property type="entry name" value="ACP-like"/>
    <property type="match status" value="4"/>
</dbReference>
<dbReference type="Gene3D" id="3.30.559.10">
    <property type="entry name" value="Chloramphenicol acetyltransferase-like domain"/>
    <property type="match status" value="5"/>
</dbReference>
<dbReference type="Gene3D" id="3.40.50.12780">
    <property type="entry name" value="N-terminal domain of ligase-like"/>
    <property type="match status" value="4"/>
</dbReference>
<dbReference type="Gene3D" id="3.30.559.30">
    <property type="entry name" value="Nonribosomal peptide synthetase, condensation domain"/>
    <property type="match status" value="5"/>
</dbReference>
<dbReference type="InterPro" id="IPR010071">
    <property type="entry name" value="AA_adenyl_dom"/>
</dbReference>
<dbReference type="InterPro" id="IPR036736">
    <property type="entry name" value="ACP-like_sf"/>
</dbReference>
<dbReference type="InterPro" id="IPR045851">
    <property type="entry name" value="AMP-bd_C_sf"/>
</dbReference>
<dbReference type="InterPro" id="IPR020845">
    <property type="entry name" value="AMP-binding_CS"/>
</dbReference>
<dbReference type="InterPro" id="IPR000873">
    <property type="entry name" value="AMP-dep_synth/lig_dom"/>
</dbReference>
<dbReference type="InterPro" id="IPR042099">
    <property type="entry name" value="ANL_N_sf"/>
</dbReference>
<dbReference type="InterPro" id="IPR023213">
    <property type="entry name" value="CAT-like_dom_sf"/>
</dbReference>
<dbReference type="InterPro" id="IPR001242">
    <property type="entry name" value="Condensatn"/>
</dbReference>
<dbReference type="InterPro" id="IPR020806">
    <property type="entry name" value="PKS_PP-bd"/>
</dbReference>
<dbReference type="InterPro" id="IPR009081">
    <property type="entry name" value="PP-bd_ACP"/>
</dbReference>
<dbReference type="InterPro" id="IPR006162">
    <property type="entry name" value="Ppantetheine_attach_site"/>
</dbReference>
<dbReference type="NCBIfam" id="TIGR01733">
    <property type="entry name" value="AA-adenyl-dom"/>
    <property type="match status" value="1"/>
</dbReference>
<dbReference type="PANTHER" id="PTHR45527:SF16">
    <property type="entry name" value="NONRIBOSOMAL PEPTIDE SYNTHASE ATNA-RELATED"/>
    <property type="match status" value="1"/>
</dbReference>
<dbReference type="PANTHER" id="PTHR45527">
    <property type="entry name" value="NONRIBOSOMAL PEPTIDE SYNTHETASE"/>
    <property type="match status" value="1"/>
</dbReference>
<dbReference type="Pfam" id="PF00501">
    <property type="entry name" value="AMP-binding"/>
    <property type="match status" value="4"/>
</dbReference>
<dbReference type="Pfam" id="PF00668">
    <property type="entry name" value="Condensation"/>
    <property type="match status" value="4"/>
</dbReference>
<dbReference type="Pfam" id="PF00550">
    <property type="entry name" value="PP-binding"/>
    <property type="match status" value="4"/>
</dbReference>
<dbReference type="SMART" id="SM00823">
    <property type="entry name" value="PKS_PP"/>
    <property type="match status" value="3"/>
</dbReference>
<dbReference type="SUPFAM" id="SSF56801">
    <property type="entry name" value="Acetyl-CoA synthetase-like"/>
    <property type="match status" value="4"/>
</dbReference>
<dbReference type="SUPFAM" id="SSF47336">
    <property type="entry name" value="ACP-like"/>
    <property type="match status" value="4"/>
</dbReference>
<dbReference type="SUPFAM" id="SSF52777">
    <property type="entry name" value="CoA-dependent acyltransferases"/>
    <property type="match status" value="10"/>
</dbReference>
<dbReference type="PROSITE" id="PS00455">
    <property type="entry name" value="AMP_BINDING"/>
    <property type="match status" value="2"/>
</dbReference>
<dbReference type="PROSITE" id="PS50075">
    <property type="entry name" value="CARRIER"/>
    <property type="match status" value="3"/>
</dbReference>
<dbReference type="PROSITE" id="PS00012">
    <property type="entry name" value="PHOSPHOPANTETHEINE"/>
    <property type="match status" value="3"/>
</dbReference>
<name>LENA_ASPLE</name>
<reference key="1">
    <citation type="journal article" date="2016" name="Genome Announc.">
        <title>Draft Genome Sequence of the Pathogenic Filamentous Fungus Aspergillus lentulus IFM 54703T.</title>
        <authorList>
            <person name="Kusuya Y."/>
            <person name="Sakai K."/>
            <person name="Kamei K."/>
            <person name="Takahashi H."/>
            <person name="Yaguchi T."/>
        </authorList>
    </citation>
    <scope>NUCLEOTIDE SEQUENCE [LARGE SCALE GENOMIC DNA]</scope>
    <source>
        <strain>IFM 54703</strain>
    </source>
</reference>
<reference key="2">
    <citation type="journal article" date="2022" name="J. Am. Chem. Soc.">
        <title>Alkaloid Biosynthetic Enzyme Generates Diastereomeric Pair via Two Distinct Mechanisms.</title>
        <authorList>
            <person name="Kishimoto S."/>
            <person name="Matsubara Y."/>
            <person name="Watanabe K."/>
        </authorList>
    </citation>
    <scope>FUNCTION</scope>
    <scope>DISRUPTION PHENOTYPE</scope>
    <scope>CATALYTIC ACTIVITY</scope>
    <scope>PATHWAY</scope>
</reference>
<gene>
    <name evidence="4" type="primary">lenA</name>
    <name type="ORF">ALT_0154</name>
</gene>
<evidence type="ECO:0000255" key="1"/>
<evidence type="ECO:0000255" key="2">
    <source>
        <dbReference type="PROSITE-ProRule" id="PRU00258"/>
    </source>
</evidence>
<evidence type="ECO:0000269" key="3">
    <source>
    </source>
</evidence>
<evidence type="ECO:0000303" key="4">
    <source>
    </source>
</evidence>
<evidence type="ECO:0000305" key="5"/>
<evidence type="ECO:0000305" key="6">
    <source>
    </source>
</evidence>
<sequence>MDTMKRKHQGLFPVLNDGGREPSVTVNEISSEARERAIAYTARRGYDIVHFLRTVWSIVLQQFLETDLVCFVFFDHSGVQVCEVPVSREESIPNLLERIAELRPLPSALCEETRMNTGLLIGDTSLDVNPTAVLDTFRRIQKDNQPCDCLLVLEGEPPHRLALVATTTLLSSDQATAVASTVSQVMVEMSAEDNSRTVGDLSLLSEHDQQCLVRWNNFQAPPTNTDGSILDTIRAKALSQPEATAIHSPDVIMTYHELDTISNKLAVHLRLLGVRPDILVPFLFQRCHWVIVVQLAVLKAGGAFVPLEPAHPNARLAEITKRTNCGFLLTSDANAGRAALLAEKVVCINHSLMSSLPTDFTTYRLVPLSSPSSPAYVLFTSGSTGQPKGCVVDCRAMAQIPNQAVVQSMGLSSSTRVLQFASYTFAISIFEIYYALGSGATICMPTDHDRINSLATVMDEMKITWACMTPSLLRTLDPERSPATLKRVFLGGEPVVKGEFEAWAAIVDLVYVYGASEVSGAIGFTDHQCDGNDIAYRAFPGMRFWISDALDYHKLAPVGVTGELILEGPALAQRYLDDVQSTLTAFIDPPLWRQSLGLPTVGAASRMYKTGDLFRYAHDGSVIHVGRKGTQVKIRGKRLDLGEVEFHVSKCCPNVARVIAETAAPLDANGVPALVLFLYYSADDAGERNEETTPQTLFAAASERFQSIVQSTQTKLEQTLPDHMLPSFYLPLASIPMTVTGKVDRRALRESVQKCTRRELEAYQPTGVVELVPPETVLEKALHAVFAQVLRIDGATFGVHHSFIRLGGDSLAAMRAVGLLTTKEYNVTVADILGQPTVSKLAQYLRNTERPQRASAAASAPPPFSLLAGGHDETVASAAQQCGMSISAIEDCYPCTALQQGLMISTMRVPGRYIARCVFDLARGLDLERLKAAWQQTVDANVILRTRIVRRASGDLIQAVLGRQVSAIQWQSYPTVGAYKMEDAVIPMQPGDALARFALIGDTFSGWSLGLTLHHAIFDAHSLGLLLEQTQQAYYGANLDPNLFSPFIETVQKQDGASEREFWTATFADIHAPVFPSLPHDRAVPRASTHLERTIPLLSRTGSGITLSNVARLAWAIVVSAHTDSEDVVFGVTVNGRATATAGAQDMTGPTIATVPFPVRCQKQKKVADVLEAVQSLAISMMAFEQTGLQKIRQMSPQAAAACDFQSQLIFQRPAALDPSHQHDAPPIMVGKTALHGLEDFSVFIDYVIGAYFDGDILPGYMAERMMGQFANVLQQLCAGQHDRVVGELELNAQKEPLMPAVSSWDRGLTYRELDVLSATIAQTIIMPAGVKERDRVALCFEKSVWPVLSMLAVLRAGATAVNIDPTLPPARMSAILETGLPVIEISQTSVPMTTTTTEEAAQIQWPTVQPNDVAFILFTSGSTGTPKGIVIEHRHFTTAFHHHRDALLQEIFFTWVHGGCLCIPSEEQRLSNLAGFIREHQVNWAIMTPSASTILRPQSVPGLETLVLAGEPIPVELMELWSSRLRLLNGYGPAEAFTCAFNRIEPGSHHPGLFGPMCGVVGWVTVPDNADRLAALGAVGELLIEGPTVTRGYLDLPELSGEAFIDAPEWLRKIRPGYLGRKDTQVKQVVAEVVQPQGSAAVMLVAFVYTAPVQGHEEKTQLLLREPDENFLQACAAAVARLEGVLPAHMIPTAMCPLYRVPYGATSKIDRRQLRQAAERLTPEQLQAYTTGVADNCKNVSKEPPVSAAEKKWQALWARVLGVPTQRIGRDDLFFRLGGDSLSVIRLLDLAGQEGLPHLTFQDVLQNPRLREIAALSETRDSSRGSDDNDDGPAPFALVKDADALLRVATNLIAATVHQRGAYQAWAVTAKCNPILRTRIFQTPDGSSYQAVLNSPLNWSRHETLDDVFASQPVMGLGTPLAHLMLSPGHLHLVIHHALYDGWSLSLLVAEVDKAYLGLPLPPAAKFNNFIAHVESSMQIIDLPDNPTQSNVTVASKIKLAWALVSRAYTNNSDTVTGFVSSGRTAPVAGIVKVPGPTIASVPLRIRLSATQRYEHLGLQNISQQSEGGAAACQFQTLIAVEAKEHEVQGAGERHTWFCGEKTRPGGGAIEVTATFDPEVLASEQMHRVLAQLDHFLVQIQAVSEASATTIADLDILSDEDLQQLLRWNALPLPPTPWGCNRCVHDLVHDACQRRPAAVAIEAWDGQFTYQQIDDHVADLAHRIQTLGVVRPDTFVGLYIEKSRWTVVAQLAPLQRLRELCAITKLPLILTTEDQQEAVAGLFSLPTGCTRVKPSNAMYTIATSGTTGKPKVAVIEHGCFIANIQPIIDAVGINANSRVLQFAGYGFDAMLIEHMITLLVITEMGANWAMLTASVIQLLTPTNVPTLTTLVQAGEPMQQGIVDRWASHNCIPPGAAPYDIGYATGGVTWVVDPDTLDPVPIGAEGELIIEGDIVGRGYLNDLERTAAAFIPCPHWLADLRRSSNANGTEPGPGTQLHRVYRTGDLIKLRGQRLELTEVEHHVQQTFPGALQVVAAVSTLGAATDTDRTDILLPASNPDFHKAVETTELALVERVPAYMVPSIFIPLSRVPRDNNGKVDRRLINARLSSLSRKEADGYSPSSSAASTIVAPQNRLQHDIRAIWAGVLGMADEDIGIHNSFFRIGGDSITSMQHRTISQLALHATRKDDGEKRALPSEEEADVGLDHASVFLHLEGPGVGGAESMARALAVIVETHPMLRARFEKSSDGTWRQRVTGNADQSNYRYYHHGVTSQEQITSICSASQQALDIRHGPLLIIDQFERDDATTWLFLVAHHLVIDLVSWRVVLADLEQLLTTGERPKVPPTSFLRWCQLQADYAARLSAPHQVEEDQETDISAYWGKGVTRNTHRDVDRYALILDKQTSELLLTKANIALNTQPVEIVQAALLHSFVHLFPDRPAPIIFSEGHGREPWDATIDITRTVGWFTTICPAQVSLDASEDFVTALRRTKDARRRSPANGWEHFTARYLHPQGPKTMKGMEILFNYQGRYQQLERPDAMLKIDMANQFTAGDVAPDMQRFAPIEDRLYQWGPVCERSLRQAAAQLTGMSGHIQTVSDFPLGSSHVTSDLLDETLRTMRTRLANGRQLIVQDVYPCTPIQQGMLMGYTRTPWHYEQVLTWRVVGASLRDVARLQAAWQHVVNAHPALRTVFLQTSDGHIEQLVLQDYTPVVRIHQDSSHQSHAPEPEPVSLDALKPLHELHVHTSSTSGDVVLRLHINHALVDGTSTKILRRDLVCAYEGQPLPTMMLESQSYRDYVEYMLTQAASLKSHQYWQSHLQGALPCLVPSLQGHDGSNDLPQSVSTIRSFTMELGPTEALDTFCEVHELALTVLFHVAWALVVKQYTASEDVCFGYIASARHAPVQGIDDMVGPLINMLVGRIDMPAGMTLLSVLQQYNRTYLHSLEHQHQPLAEALNAIGSTSGELFNTLLTVQYQQDPRKDAAGDPSGIVLLDEDMEDKSEYPVTLNVAVFPDRVELLFSHHTAHMSDWYAARMARCFRHALAEVLTHPSLPVGEIQVVDDSQRQQILQRNEPLADPVNTCVHHIIHQRCLDFPASAAVCSWDGEFTYEELDTVSSALAEELIDYSIGVDMTIPVLLEKSRWVPVAVLGILKTGASFVLMDASHPEARLRGLCEDVQAPLILASRGTFSKASNLAPHVVCLGERLLGEIACPHPARWSRVPVCASNAAYTVFTSGSTGKPKGAILDHSCLATAAKHLQSCMYMNSASRVLQFSSHAWDIAVADIVLTLLAGGCVCIPSEEERTGDIAAAANRMRVNWAILTPTVSRLVKPGALKHLQTLVLAGEPLSPSDLAIWHDKVRLISAYGPAECCPISTVSEPLTASSNPRDIGRPPANVAWIVDRDNHARLVPEGVVGELLLEGPTVGRGYVNNAQQTAAAFIDPPLWLRGLRHGQSSTRLYKTGDLARFTPDGRLIFVGRKDNQIKIRGQRLELGEVEAQAGIAFLNRDVTVELVGQADDAFLVAFVHPMADDHESPAAGTGSLLRQPHSQQFQESVRAAISTLREALPSYMVPTAFLPLAWVPKSPTGKTDRKRLIELAASLSQSELDVYSGTNATRRTPSTPLEAQLQDLVARVLKRSPGSIALDEDLFHIGLDSLRAMTLASLAAKEGLKLLALTIFQHPRLSQLAAVLEEGARAAAVSSTTSSSPQSTPNPLLDSVDDLCTKWKIDRSQVADVLPTTFYQRGSLDCQHLAHMVLTFSQPVDVARLQSVVVAAIRHYDILRTVFVPFENTTVQLILHKMSLPTVEIQTDKDLQSTVQSICQQDIQTPIPPGHPVTRLFFVISRKQDDNHLAMILRLHHAQYDGVSIRRIHNYITAAYEEPTHPPLTTAGYADFLNARRHHQHASTFQFWRDLLHGSTMTCLASGGGHISTTTHRHRMDLLVTSAREIPRPRLQPGLTMATYLKAAWALVLAAQTHTHDLVFAQLVSGRNLPVPDIDRIVGPCINYIPVRVTLQPTWTCSELLRNVQAQHIRTMAHDAVDFDELVARSTAWPAGTEIGTGVHFLHGDRFWDEVRTVAGVECRSQHVDFKLLQTYPMLTCTGSPDAEEATGRSVLGVALTSAVFGQEVADRVFEVFLGMLDYLTTTPEKLVAEVI</sequence>
<organism>
    <name type="scientific">Aspergillus lentulus</name>
    <dbReference type="NCBI Taxonomy" id="293939"/>
    <lineage>
        <taxon>Eukaryota</taxon>
        <taxon>Fungi</taxon>
        <taxon>Dikarya</taxon>
        <taxon>Ascomycota</taxon>
        <taxon>Pezizomycotina</taxon>
        <taxon>Eurotiomycetes</taxon>
        <taxon>Eurotiomycetidae</taxon>
        <taxon>Eurotiales</taxon>
        <taxon>Aspergillaceae</taxon>
        <taxon>Aspergillus</taxon>
        <taxon>Aspergillus subgen. Fumigati</taxon>
    </lineage>
</organism>
<comment type="function">
    <text evidence="3">Nonribosomal peptide synthetase; part of the gene cluster that mediates the biosynthesis of the ergot alkaloids lentopeptins A and B (PubMed:35302734). Within the pathway, lenA catalyzes the biosynthesis of the Ala-Val-Ala peptide chain, including a cinnamic acid moiety as the starting unit. The release of the peptide from the enzyme is accomplished via a cyclization reaction catalyzed by the terminal condensation-like (Ct) domain of lenA to form the N-acyldiketopiperazine intermediate. The reaction appears to proceed through a nucleophilic attack on the carbonyl carbon by a lone electron pair of the valine amide nitrogen (PubMed:35302734). The phenylalanine ammonia-lyase lenB provides the starter unit for the synthesis of the N-acyldiketopiperazine intermediate by the NRPS lenA, while the cytochrome P450 monooxygenase lenC is involved in the post-NRPS oxidative modification steps to form lentopeptins A and B (PubMed:35302734).</text>
</comment>
<comment type="cofactor">
    <cofactor evidence="2">
        <name>pantetheine 4'-phosphate</name>
        <dbReference type="ChEBI" id="CHEBI:47942"/>
    </cofactor>
</comment>
<comment type="pathway">
    <text evidence="3">Alkaloid biosynthesis.</text>
</comment>
<comment type="domain">
    <text evidence="6">NRP synthetases are composed of discrete domains (adenylation (A), thiolation (T) or peptidyl carrier protein (PCP) and condensation (C) domains) which when grouped together are referred to as a single module. Each module is responsible for the recognition (via the A domain) and incorporation of a single amino acid into the growing peptide product. Thus, an NRP synthetase is generally composed of one or more modules and can terminate in a thioesterase domain (TE) that releases the newly synthesized peptide from the enzyme. Occasionally, epimerase (E) domains (responsible for L- to D-amino acid conversion) are present within the NRP synthetase. FrbI has the following architecture: A-T-C-A-T-C-A-T-E-C-A-T-Ct.</text>
</comment>
<comment type="disruption phenotype">
    <text evidence="3">Abolishes the biosynthesis of lentopeptins A and B.</text>
</comment>
<comment type="similarity">
    <text evidence="5">Belongs to the NRP synthetase family.</text>
</comment>